<keyword id="KW-0963">Cytoplasm</keyword>
<keyword id="KW-0489">Methyltransferase</keyword>
<keyword id="KW-0949">S-adenosyl-L-methionine</keyword>
<keyword id="KW-0808">Transferase</keyword>
<keyword id="KW-0819">tRNA processing</keyword>
<accession>Q7U374</accession>
<name>TRMD_BORPA</name>
<reference key="1">
    <citation type="journal article" date="2003" name="Nat. Genet.">
        <title>Comparative analysis of the genome sequences of Bordetella pertussis, Bordetella parapertussis and Bordetella bronchiseptica.</title>
        <authorList>
            <person name="Parkhill J."/>
            <person name="Sebaihia M."/>
            <person name="Preston A."/>
            <person name="Murphy L.D."/>
            <person name="Thomson N.R."/>
            <person name="Harris D.E."/>
            <person name="Holden M.T.G."/>
            <person name="Churcher C.M."/>
            <person name="Bentley S.D."/>
            <person name="Mungall K.L."/>
            <person name="Cerdeno-Tarraga A.-M."/>
            <person name="Temple L."/>
            <person name="James K.D."/>
            <person name="Harris B."/>
            <person name="Quail M.A."/>
            <person name="Achtman M."/>
            <person name="Atkin R."/>
            <person name="Baker S."/>
            <person name="Basham D."/>
            <person name="Bason N."/>
            <person name="Cherevach I."/>
            <person name="Chillingworth T."/>
            <person name="Collins M."/>
            <person name="Cronin A."/>
            <person name="Davis P."/>
            <person name="Doggett J."/>
            <person name="Feltwell T."/>
            <person name="Goble A."/>
            <person name="Hamlin N."/>
            <person name="Hauser H."/>
            <person name="Holroyd S."/>
            <person name="Jagels K."/>
            <person name="Leather S."/>
            <person name="Moule S."/>
            <person name="Norberczak H."/>
            <person name="O'Neil S."/>
            <person name="Ormond D."/>
            <person name="Price C."/>
            <person name="Rabbinowitsch E."/>
            <person name="Rutter S."/>
            <person name="Sanders M."/>
            <person name="Saunders D."/>
            <person name="Seeger K."/>
            <person name="Sharp S."/>
            <person name="Simmonds M."/>
            <person name="Skelton J."/>
            <person name="Squares R."/>
            <person name="Squares S."/>
            <person name="Stevens K."/>
            <person name="Unwin L."/>
            <person name="Whitehead S."/>
            <person name="Barrell B.G."/>
            <person name="Maskell D.J."/>
        </authorList>
    </citation>
    <scope>NUCLEOTIDE SEQUENCE [LARGE SCALE GENOMIC DNA]</scope>
    <source>
        <strain>12822 / ATCC BAA-587 / NCTC 13253</strain>
    </source>
</reference>
<comment type="function">
    <text evidence="1">Specifically methylates guanosine-37 in various tRNAs.</text>
</comment>
<comment type="catalytic activity">
    <reaction evidence="1">
        <text>guanosine(37) in tRNA + S-adenosyl-L-methionine = N(1)-methylguanosine(37) in tRNA + S-adenosyl-L-homocysteine + H(+)</text>
        <dbReference type="Rhea" id="RHEA:36899"/>
        <dbReference type="Rhea" id="RHEA-COMP:10145"/>
        <dbReference type="Rhea" id="RHEA-COMP:10147"/>
        <dbReference type="ChEBI" id="CHEBI:15378"/>
        <dbReference type="ChEBI" id="CHEBI:57856"/>
        <dbReference type="ChEBI" id="CHEBI:59789"/>
        <dbReference type="ChEBI" id="CHEBI:73542"/>
        <dbReference type="ChEBI" id="CHEBI:74269"/>
        <dbReference type="EC" id="2.1.1.228"/>
    </reaction>
</comment>
<comment type="subunit">
    <text evidence="1">Homodimer.</text>
</comment>
<comment type="subcellular location">
    <subcellularLocation>
        <location evidence="1">Cytoplasm</location>
    </subcellularLocation>
</comment>
<comment type="similarity">
    <text evidence="1">Belongs to the RNA methyltransferase TrmD family.</text>
</comment>
<feature type="chain" id="PRO_0000060337" description="tRNA (guanine-N(1)-)-methyltransferase">
    <location>
        <begin position="1"/>
        <end position="257"/>
    </location>
</feature>
<feature type="binding site" evidence="1">
    <location>
        <position position="117"/>
    </location>
    <ligand>
        <name>S-adenosyl-L-methionine</name>
        <dbReference type="ChEBI" id="CHEBI:59789"/>
    </ligand>
</feature>
<feature type="binding site" evidence="1">
    <location>
        <begin position="137"/>
        <end position="142"/>
    </location>
    <ligand>
        <name>S-adenosyl-L-methionine</name>
        <dbReference type="ChEBI" id="CHEBI:59789"/>
    </ligand>
</feature>
<protein>
    <recommendedName>
        <fullName evidence="1">tRNA (guanine-N(1)-)-methyltransferase</fullName>
        <ecNumber evidence="1">2.1.1.228</ecNumber>
    </recommendedName>
    <alternativeName>
        <fullName evidence="1">M1G-methyltransferase</fullName>
    </alternativeName>
    <alternativeName>
        <fullName evidence="1">tRNA [GM37] methyltransferase</fullName>
    </alternativeName>
</protein>
<dbReference type="EC" id="2.1.1.228" evidence="1"/>
<dbReference type="EMBL" id="BX640431">
    <property type="protein sequence ID" value="CAE38157.1"/>
    <property type="molecule type" value="Genomic_DNA"/>
</dbReference>
<dbReference type="RefSeq" id="WP_010926756.1">
    <property type="nucleotide sequence ID" value="NC_002928.3"/>
</dbReference>
<dbReference type="SMR" id="Q7U374"/>
<dbReference type="GeneID" id="93204652"/>
<dbReference type="KEGG" id="bpa:BPP2865"/>
<dbReference type="HOGENOM" id="CLU_047363_0_1_4"/>
<dbReference type="Proteomes" id="UP000001421">
    <property type="component" value="Chromosome"/>
</dbReference>
<dbReference type="GO" id="GO:0005829">
    <property type="term" value="C:cytosol"/>
    <property type="evidence" value="ECO:0007669"/>
    <property type="project" value="TreeGrafter"/>
</dbReference>
<dbReference type="GO" id="GO:0052906">
    <property type="term" value="F:tRNA (guanine(37)-N1)-methyltransferase activity"/>
    <property type="evidence" value="ECO:0007669"/>
    <property type="project" value="UniProtKB-UniRule"/>
</dbReference>
<dbReference type="GO" id="GO:0002939">
    <property type="term" value="P:tRNA N1-guanine methylation"/>
    <property type="evidence" value="ECO:0007669"/>
    <property type="project" value="TreeGrafter"/>
</dbReference>
<dbReference type="CDD" id="cd18080">
    <property type="entry name" value="TrmD-like"/>
    <property type="match status" value="1"/>
</dbReference>
<dbReference type="FunFam" id="3.40.1280.10:FF:000001">
    <property type="entry name" value="tRNA (guanine-N(1)-)-methyltransferase"/>
    <property type="match status" value="1"/>
</dbReference>
<dbReference type="Gene3D" id="3.40.1280.10">
    <property type="match status" value="1"/>
</dbReference>
<dbReference type="Gene3D" id="1.10.1270.20">
    <property type="entry name" value="tRNA(m1g37)methyltransferase, domain 2"/>
    <property type="match status" value="1"/>
</dbReference>
<dbReference type="HAMAP" id="MF_00605">
    <property type="entry name" value="TrmD"/>
    <property type="match status" value="1"/>
</dbReference>
<dbReference type="InterPro" id="IPR029028">
    <property type="entry name" value="Alpha/beta_knot_MTases"/>
</dbReference>
<dbReference type="InterPro" id="IPR023148">
    <property type="entry name" value="tRNA_m1G_MeTrfase_C_sf"/>
</dbReference>
<dbReference type="InterPro" id="IPR002649">
    <property type="entry name" value="tRNA_m1G_MeTrfase_TrmD"/>
</dbReference>
<dbReference type="InterPro" id="IPR029026">
    <property type="entry name" value="tRNA_m1G_MTases_N"/>
</dbReference>
<dbReference type="InterPro" id="IPR016009">
    <property type="entry name" value="tRNA_MeTrfase_TRMD/TRM10"/>
</dbReference>
<dbReference type="NCBIfam" id="NF000648">
    <property type="entry name" value="PRK00026.1"/>
    <property type="match status" value="1"/>
</dbReference>
<dbReference type="NCBIfam" id="TIGR00088">
    <property type="entry name" value="trmD"/>
    <property type="match status" value="1"/>
</dbReference>
<dbReference type="PANTHER" id="PTHR46417">
    <property type="entry name" value="TRNA (GUANINE-N(1)-)-METHYLTRANSFERASE"/>
    <property type="match status" value="1"/>
</dbReference>
<dbReference type="PANTHER" id="PTHR46417:SF1">
    <property type="entry name" value="TRNA (GUANINE-N(1)-)-METHYLTRANSFERASE"/>
    <property type="match status" value="1"/>
</dbReference>
<dbReference type="Pfam" id="PF01746">
    <property type="entry name" value="tRNA_m1G_MT"/>
    <property type="match status" value="1"/>
</dbReference>
<dbReference type="PIRSF" id="PIRSF000386">
    <property type="entry name" value="tRNA_mtase"/>
    <property type="match status" value="1"/>
</dbReference>
<dbReference type="SUPFAM" id="SSF75217">
    <property type="entry name" value="alpha/beta knot"/>
    <property type="match status" value="1"/>
</dbReference>
<gene>
    <name evidence="1" type="primary">trmD</name>
    <name type="ordered locus">BPP2865</name>
</gene>
<evidence type="ECO:0000255" key="1">
    <source>
        <dbReference type="HAMAP-Rule" id="MF_00605"/>
    </source>
</evidence>
<sequence>MRFDVVTLFPDMFGLVRDQGVTGRAHAQGLWALHAWNPRDFTQDVHRTVDDRPYGGGPGMVMMAAPLEAAVAAAQAARAAQGLQAAPVILLSPAGRRYDQAEATTLAAGTGAIFICGRYEGVDQRFIERCVTHELSLGDFVLSGGELAALAMMDAAVRLLPGVLNDGDSALQDSFNAALDGLLDSPHYTRPEVYEGVPVPQPLLSGHHANIARWRREQSLRLTASRRPELIERARGEGRLSKADERFLAGLAGERKS</sequence>
<proteinExistence type="inferred from homology"/>
<organism>
    <name type="scientific">Bordetella parapertussis (strain 12822 / ATCC BAA-587 / NCTC 13253)</name>
    <dbReference type="NCBI Taxonomy" id="257311"/>
    <lineage>
        <taxon>Bacteria</taxon>
        <taxon>Pseudomonadati</taxon>
        <taxon>Pseudomonadota</taxon>
        <taxon>Betaproteobacteria</taxon>
        <taxon>Burkholderiales</taxon>
        <taxon>Alcaligenaceae</taxon>
        <taxon>Bordetella</taxon>
    </lineage>
</organism>